<evidence type="ECO:0000269" key="1">
    <source>
    </source>
</evidence>
<evidence type="ECO:0000305" key="2"/>
<name>ODAIF_SARBU</name>
<organism evidence="2">
    <name type="scientific">Sarcophaga bullata</name>
    <name type="common">Grey flesh fly</name>
    <name type="synonym">Neobellieria bullata</name>
    <dbReference type="NCBI Taxonomy" id="7385"/>
    <lineage>
        <taxon>Eukaryota</taxon>
        <taxon>Metazoa</taxon>
        <taxon>Ecdysozoa</taxon>
        <taxon>Arthropoda</taxon>
        <taxon>Hexapoda</taxon>
        <taxon>Insecta</taxon>
        <taxon>Pterygota</taxon>
        <taxon>Neoptera</taxon>
        <taxon>Endopterygota</taxon>
        <taxon>Diptera</taxon>
        <taxon>Brachycera</taxon>
        <taxon>Muscomorpha</taxon>
        <taxon>Oestroidea</taxon>
        <taxon>Sarcophagidae</taxon>
        <taxon>Sarcophaga</taxon>
        <taxon>Neobellieria</taxon>
    </lineage>
</organism>
<sequence length="11" mass="1314">NKLKPSQWISL</sequence>
<keyword id="KW-0903">Direct protein sequencing</keyword>
<keyword id="KW-0481">Metalloenzyme inhibitor</keyword>
<keyword id="KW-0483">Metalloprotease inhibitor</keyword>
<keyword id="KW-0646">Protease inhibitor</keyword>
<feature type="peptide" id="PRO_0000021875" description="Ovary-derived ACE interactive factor">
    <location>
        <begin position="1"/>
        <end position="11"/>
    </location>
</feature>
<feature type="peptide" id="PRO_0000021876" description="Neb-ODAIF(1-9)">
    <location>
        <begin position="1"/>
        <end position="9"/>
    </location>
</feature>
<feature type="peptide" id="PRO_0000021877" description="Neb-ODAIF(1-7)">
    <location>
        <begin position="1"/>
        <end position="7"/>
    </location>
</feature>
<comment type="function">
    <text evidence="1">Substrate for angiotensin converting enzyme (ACE) in vitro.</text>
</comment>
<comment type="PTM">
    <text evidence="1">ACE hydrolyzes Neb-ODAIF by sequentially cleaving off two C-terminal dipeptides.</text>
</comment>
<comment type="mass spectrometry" mass="1312.7" method="MALDI" evidence="1">
    <molecule>Ovary-derived ACE interactive factor</molecule>
</comment>
<comment type="similarity">
    <text evidence="2">To the N-terminal part of insect vitellogenins.</text>
</comment>
<accession>P83518</accession>
<proteinExistence type="evidence at protein level"/>
<protein>
    <recommendedName>
        <fullName>Ovary-derived ACE interactive factor</fullName>
    </recommendedName>
    <alternativeName>
        <fullName>Neb-ODAIF</fullName>
    </alternativeName>
    <component>
        <recommendedName>
            <fullName>Neb-ODAIF(1-9)</fullName>
        </recommendedName>
    </component>
    <component>
        <recommendedName>
            <fullName>Neb-ODAIF(1-7)</fullName>
        </recommendedName>
    </component>
</protein>
<dbReference type="GO" id="GO:0030414">
    <property type="term" value="F:peptidase inhibitor activity"/>
    <property type="evidence" value="ECO:0007669"/>
    <property type="project" value="UniProtKB-KW"/>
</dbReference>
<reference evidence="2" key="1">
    <citation type="journal article" date="2002" name="Peptides">
        <title>Isolation and characterization of an angiotensin converting enzyme substrate from vitellogenic ovaries of Neobellieria bullata.</title>
        <authorList>
            <person name="Vandingenen A."/>
            <person name="Hens K."/>
            <person name="Baggerman G."/>
            <person name="Macours N."/>
            <person name="Schoofs L."/>
            <person name="De Loof A."/>
            <person name="Huybrechts R."/>
        </authorList>
    </citation>
    <scope>PROTEIN SEQUENCE</scope>
    <scope>SYNTHESIS</scope>
    <scope>CHARACTERIZATION</scope>
    <scope>MASS SPECTROMETRY</scope>
    <source>
        <tissue>Ovary</tissue>
    </source>
</reference>